<feature type="chain" id="PRO_0000406204" description="Dauer abnormal formation protein 25">
    <location>
        <begin position="1"/>
        <end position="388"/>
    </location>
</feature>
<feature type="repeat" description="ANK 1">
    <location>
        <begin position="40"/>
        <end position="69"/>
    </location>
</feature>
<feature type="repeat" description="ANK 2">
    <location>
        <begin position="74"/>
        <end position="103"/>
    </location>
</feature>
<feature type="repeat" description="ANK 3">
    <location>
        <begin position="107"/>
        <end position="137"/>
    </location>
</feature>
<feature type="zinc finger region" description="MYND-type" evidence="1">
    <location>
        <begin position="321"/>
        <end position="357"/>
    </location>
</feature>
<feature type="binding site" evidence="1">
    <location>
        <position position="321"/>
    </location>
    <ligand>
        <name>Zn(2+)</name>
        <dbReference type="ChEBI" id="CHEBI:29105"/>
        <label>1</label>
    </ligand>
</feature>
<feature type="binding site" evidence="1">
    <location>
        <position position="324"/>
    </location>
    <ligand>
        <name>Zn(2+)</name>
        <dbReference type="ChEBI" id="CHEBI:29105"/>
        <label>1</label>
    </ligand>
</feature>
<feature type="binding site" evidence="1">
    <location>
        <position position="333"/>
    </location>
    <ligand>
        <name>Zn(2+)</name>
        <dbReference type="ChEBI" id="CHEBI:29105"/>
        <label>2</label>
    </ligand>
</feature>
<feature type="binding site" evidence="1">
    <location>
        <position position="336"/>
    </location>
    <ligand>
        <name>Zn(2+)</name>
        <dbReference type="ChEBI" id="CHEBI:29105"/>
        <label>2</label>
    </ligand>
</feature>
<feature type="binding site" evidence="1">
    <location>
        <position position="341"/>
    </location>
    <ligand>
        <name>Zn(2+)</name>
        <dbReference type="ChEBI" id="CHEBI:29105"/>
        <label>1</label>
    </ligand>
</feature>
<feature type="binding site" evidence="1">
    <location>
        <position position="345"/>
    </location>
    <ligand>
        <name>Zn(2+)</name>
        <dbReference type="ChEBI" id="CHEBI:29105"/>
        <label>1</label>
    </ligand>
</feature>
<feature type="binding site" evidence="1">
    <location>
        <position position="353"/>
    </location>
    <ligand>
        <name>Zn(2+)</name>
        <dbReference type="ChEBI" id="CHEBI:29105"/>
        <label>2</label>
    </ligand>
</feature>
<feature type="binding site" evidence="1">
    <location>
        <position position="357"/>
    </location>
    <ligand>
        <name>Zn(2+)</name>
        <dbReference type="ChEBI" id="CHEBI:29105"/>
        <label>2</label>
    </ligand>
</feature>
<accession>Q9N3Q8</accession>
<reference key="1">
    <citation type="journal article" date="1998" name="Science">
        <title>Genome sequence of the nematode C. elegans: a platform for investigating biology.</title>
        <authorList>
            <consortium name="The C. elegans sequencing consortium"/>
        </authorList>
    </citation>
    <scope>NUCLEOTIDE SEQUENCE [LARGE SCALE GENOMIC DNA]</scope>
    <source>
        <strain>Bristol N2</strain>
    </source>
</reference>
<reference key="2">
    <citation type="journal article" date="2010" name="PLoS Genet.">
        <title>A novel zf-MYND protein, CHB-3, mediates guanylyl cyclase localization to sensory cilia and controls body size of Caenorhabditis elegans.</title>
        <authorList>
            <person name="Fujiwara M."/>
            <person name="Teramoto T."/>
            <person name="Ishihara T."/>
            <person name="Ohshima Y."/>
            <person name="McIntire S.L."/>
        </authorList>
    </citation>
    <scope>DISRUPTION PHENOTYPE</scope>
    <scope>FUNCTION</scope>
</reference>
<reference key="3">
    <citation type="journal article" date="2010" name="PLoS Genet.">
        <title>Localization of a guanylyl cyclase to chemosensory cilia requires the novel ciliary MYND domain protein DAF-25.</title>
        <authorList>
            <person name="Jensen V.L."/>
            <person name="Bialas N.J."/>
            <person name="Bishop-Hurley S.L."/>
            <person name="Molday L.L."/>
            <person name="Kida K."/>
            <person name="Nguyen P.A."/>
            <person name="Blacque O.E."/>
            <person name="Molday R.S."/>
            <person name="Leroux M.R."/>
            <person name="Riddle D.L."/>
        </authorList>
    </citation>
    <scope>SUBCELLULAR LOCATION</scope>
    <scope>TISSUE SPECIFICITY</scope>
    <scope>FUNCTION</scope>
</reference>
<reference key="4">
    <citation type="journal article" date="2018" name="Elife">
        <title>Thioredoxin shapes the C. elegans sensory response to Pseudomonas produced nitric oxide.</title>
        <authorList>
            <person name="Hao Y."/>
            <person name="Yang W."/>
            <person name="Ren J."/>
            <person name="Hall Q."/>
            <person name="Zhang Y."/>
            <person name="Kaplan J.M."/>
        </authorList>
    </citation>
    <scope>FUNCTION</scope>
</reference>
<sequence length="388" mass="43674">MTTTEEAPKSPLFEAIDKNDTEAALALLKTKEQAAQRDPSGMSVLAAAAYRGNLTLVEKAIELKCDVNDKTDGTLYTPLMFAALSGKQDVCRLLMDSGARMYLVNGIGKTASELAAFVGHHECVAIINNHITIDVIEDLLRPKVNGKYEGAEEYPDELAVFIHSLCGSHEIHPVKIIFRFSKYPDSLKYKKKILYVIDRVFEKQLRCKESNEIMSLKLWLILFSMRETSKFVESNKEKSPEEASLQYAKLISTWQEGDETRRALDVMLRNAVASFPYKHSLLHDTLQKALQKSQIGERPSAYEYIVQALFGQRIAAVCQFCSVCGHPGAKKRCTQCKLAYCSQECQKFDWPIHKKVCSFLKTRQEVSPTDETAMSLDDIQAQIAKIDV</sequence>
<organism>
    <name type="scientific">Caenorhabditis elegans</name>
    <dbReference type="NCBI Taxonomy" id="6239"/>
    <lineage>
        <taxon>Eukaryota</taxon>
        <taxon>Metazoa</taxon>
        <taxon>Ecdysozoa</taxon>
        <taxon>Nematoda</taxon>
        <taxon>Chromadorea</taxon>
        <taxon>Rhabditida</taxon>
        <taxon>Rhabditina</taxon>
        <taxon>Rhabditomorpha</taxon>
        <taxon>Rhabditoidea</taxon>
        <taxon>Rhabditidae</taxon>
        <taxon>Peloderinae</taxon>
        <taxon>Caenorhabditis</taxon>
    </lineage>
</organism>
<keyword id="KW-0040">ANK repeat</keyword>
<keyword id="KW-0966">Cell projection</keyword>
<keyword id="KW-0969">Cilium</keyword>
<keyword id="KW-0479">Metal-binding</keyword>
<keyword id="KW-1185">Reference proteome</keyword>
<keyword id="KW-0677">Repeat</keyword>
<keyword id="KW-0862">Zinc</keyword>
<keyword id="KW-0863">Zinc-finger</keyword>
<gene>
    <name type="primary">daf-25</name>
    <name type="ORF">Y48G1A.3</name>
</gene>
<dbReference type="EMBL" id="FO080938">
    <property type="protein sequence ID" value="CCD67941.1"/>
    <property type="molecule type" value="Genomic_DNA"/>
</dbReference>
<dbReference type="RefSeq" id="NP_490719.1">
    <property type="nucleotide sequence ID" value="NM_058318.5"/>
</dbReference>
<dbReference type="SMR" id="Q9N3Q8"/>
<dbReference type="BioGRID" id="37125">
    <property type="interactions" value="6"/>
</dbReference>
<dbReference type="FunCoup" id="Q9N3Q8">
    <property type="interactions" value="2618"/>
</dbReference>
<dbReference type="STRING" id="6239.Y48G1A.3.1"/>
<dbReference type="PaxDb" id="6239-Y48G1A.3"/>
<dbReference type="PeptideAtlas" id="Q9N3Q8"/>
<dbReference type="EnsemblMetazoa" id="Y48G1A.3.1">
    <property type="protein sequence ID" value="Y48G1A.3.1"/>
    <property type="gene ID" value="WBGene00000917"/>
</dbReference>
<dbReference type="GeneID" id="171623"/>
<dbReference type="KEGG" id="cel:CELE_Y48G1A.3"/>
<dbReference type="UCSC" id="Y48G1A.3">
    <property type="organism name" value="c. elegans"/>
</dbReference>
<dbReference type="AGR" id="WB:WBGene00000917"/>
<dbReference type="CTD" id="171623"/>
<dbReference type="WormBase" id="Y48G1A.3">
    <property type="protein sequence ID" value="CE26999"/>
    <property type="gene ID" value="WBGene00000917"/>
    <property type="gene designation" value="daf-25"/>
</dbReference>
<dbReference type="eggNOG" id="KOG1710">
    <property type="taxonomic scope" value="Eukaryota"/>
</dbReference>
<dbReference type="HOGENOM" id="CLU_048951_0_0_1"/>
<dbReference type="InParanoid" id="Q9N3Q8"/>
<dbReference type="OMA" id="EFPFREC"/>
<dbReference type="OrthoDB" id="10257049at2759"/>
<dbReference type="PhylomeDB" id="Q9N3Q8"/>
<dbReference type="PRO" id="PR:Q9N3Q8"/>
<dbReference type="Proteomes" id="UP000001940">
    <property type="component" value="Chromosome I"/>
</dbReference>
<dbReference type="Bgee" id="WBGene00000917">
    <property type="expression patterns" value="Expressed in germ line (C elegans) and 4 other cell types or tissues"/>
</dbReference>
<dbReference type="GO" id="GO:0097730">
    <property type="term" value="C:non-motile cilium"/>
    <property type="evidence" value="ECO:0000314"/>
    <property type="project" value="WormBase"/>
</dbReference>
<dbReference type="GO" id="GO:0008270">
    <property type="term" value="F:zinc ion binding"/>
    <property type="evidence" value="ECO:0007669"/>
    <property type="project" value="UniProtKB-KW"/>
</dbReference>
<dbReference type="GO" id="GO:0007635">
    <property type="term" value="P:chemosensory behavior"/>
    <property type="evidence" value="ECO:0000315"/>
    <property type="project" value="UniProtKB"/>
</dbReference>
<dbReference type="GO" id="GO:0043054">
    <property type="term" value="P:dauer exit"/>
    <property type="evidence" value="ECO:0000315"/>
    <property type="project" value="WormBase"/>
</dbReference>
<dbReference type="GO" id="GO:0030033">
    <property type="term" value="P:microvillus assembly"/>
    <property type="evidence" value="ECO:0000315"/>
    <property type="project" value="WormBase"/>
</dbReference>
<dbReference type="GO" id="GO:0061067">
    <property type="term" value="P:negative regulation of dauer larval development"/>
    <property type="evidence" value="ECO:0000315"/>
    <property type="project" value="WormBase"/>
</dbReference>
<dbReference type="GO" id="GO:0010753">
    <property type="term" value="P:positive regulation of cGMP-mediated signaling"/>
    <property type="evidence" value="ECO:0000315"/>
    <property type="project" value="WormBase"/>
</dbReference>
<dbReference type="GO" id="GO:1904107">
    <property type="term" value="P:protein localization to microvillus membrane"/>
    <property type="evidence" value="ECO:0000315"/>
    <property type="project" value="WormBase"/>
</dbReference>
<dbReference type="GO" id="GO:0097499">
    <property type="term" value="P:protein localization to non-motile cilium"/>
    <property type="evidence" value="ECO:0000315"/>
    <property type="project" value="WormBase"/>
</dbReference>
<dbReference type="GO" id="GO:0097500">
    <property type="term" value="P:receptor localization to non-motile cilium"/>
    <property type="evidence" value="ECO:0000315"/>
    <property type="project" value="WormBase"/>
</dbReference>
<dbReference type="GO" id="GO:0050920">
    <property type="term" value="P:regulation of chemotaxis"/>
    <property type="evidence" value="ECO:0000315"/>
    <property type="project" value="WormBase"/>
</dbReference>
<dbReference type="GO" id="GO:0061065">
    <property type="term" value="P:regulation of dauer larval development"/>
    <property type="evidence" value="ECO:0000316"/>
    <property type="project" value="UniProtKB"/>
</dbReference>
<dbReference type="GO" id="GO:0046662">
    <property type="term" value="P:regulation of egg-laying behavior"/>
    <property type="evidence" value="ECO:0000315"/>
    <property type="project" value="WormBase"/>
</dbReference>
<dbReference type="GO" id="GO:0006970">
    <property type="term" value="P:response to osmotic stress"/>
    <property type="evidence" value="ECO:0000315"/>
    <property type="project" value="WormBase"/>
</dbReference>
<dbReference type="GO" id="GO:0009266">
    <property type="term" value="P:response to temperature stimulus"/>
    <property type="evidence" value="ECO:0000315"/>
    <property type="project" value="UniProtKB"/>
</dbReference>
<dbReference type="Gene3D" id="6.10.140.2220">
    <property type="match status" value="1"/>
</dbReference>
<dbReference type="Gene3D" id="1.25.40.20">
    <property type="entry name" value="Ankyrin repeat-containing domain"/>
    <property type="match status" value="1"/>
</dbReference>
<dbReference type="InterPro" id="IPR052452">
    <property type="entry name" value="Ankyrin-MYND_dom_contain_2"/>
</dbReference>
<dbReference type="InterPro" id="IPR002110">
    <property type="entry name" value="Ankyrin_rpt"/>
</dbReference>
<dbReference type="InterPro" id="IPR036770">
    <property type="entry name" value="Ankyrin_rpt-contain_sf"/>
</dbReference>
<dbReference type="InterPro" id="IPR002893">
    <property type="entry name" value="Znf_MYND"/>
</dbReference>
<dbReference type="PANTHER" id="PTHR24150">
    <property type="entry name" value="ANKYRIN REPEAT AND MYND DOMAIN-CONTAINING PROTEIN 2"/>
    <property type="match status" value="1"/>
</dbReference>
<dbReference type="PANTHER" id="PTHR24150:SF8">
    <property type="entry name" value="ANKYRIN REPEAT AND MYND DOMAIN-CONTAINING PROTEIN 2"/>
    <property type="match status" value="1"/>
</dbReference>
<dbReference type="Pfam" id="PF12796">
    <property type="entry name" value="Ank_2"/>
    <property type="match status" value="1"/>
</dbReference>
<dbReference type="Pfam" id="PF01753">
    <property type="entry name" value="zf-MYND"/>
    <property type="match status" value="1"/>
</dbReference>
<dbReference type="SMART" id="SM00248">
    <property type="entry name" value="ANK"/>
    <property type="match status" value="3"/>
</dbReference>
<dbReference type="SUPFAM" id="SSF48403">
    <property type="entry name" value="Ankyrin repeat"/>
    <property type="match status" value="1"/>
</dbReference>
<dbReference type="SUPFAM" id="SSF144232">
    <property type="entry name" value="HIT/MYND zinc finger-like"/>
    <property type="match status" value="1"/>
</dbReference>
<dbReference type="PROSITE" id="PS50297">
    <property type="entry name" value="ANK_REP_REGION"/>
    <property type="match status" value="1"/>
</dbReference>
<dbReference type="PROSITE" id="PS50088">
    <property type="entry name" value="ANK_REPEAT"/>
    <property type="match status" value="1"/>
</dbReference>
<dbReference type="PROSITE" id="PS50865">
    <property type="entry name" value="ZF_MYND_2"/>
    <property type="match status" value="1"/>
</dbReference>
<proteinExistence type="evidence at transcript level"/>
<name>DAF25_CAEEL</name>
<evidence type="ECO:0000255" key="1">
    <source>
        <dbReference type="PROSITE-ProRule" id="PRU00134"/>
    </source>
</evidence>
<evidence type="ECO:0000269" key="2">
    <source>
    </source>
</evidence>
<evidence type="ECO:0000269" key="3">
    <source>
    </source>
</evidence>
<evidence type="ECO:0000269" key="4">
    <source>
    </source>
</evidence>
<comment type="function">
    <text evidence="2 3 4">May be involved in the trafficking and dendritic transport of signaling proteins, such as the receptor-type guanylate cyclases gcy-12 and daf-11, to the cilia. In ciliated sensory neurons, required for the calcium flux to the cytoplasm in response to onset and removal of a nitric oxide (NO) stimulus and is thereby required for the behavioral avoidance response to NO-producing organisms like P.aeruginosa (PubMed:30014846).</text>
</comment>
<comment type="subcellular location">
    <subcellularLocation>
        <location evidence="3">Cell projection</location>
        <location evidence="3">Cilium</location>
    </subcellularLocation>
</comment>
<comment type="tissue specificity">
    <text evidence="3">Expressed in many ciliated sensory neurons.</text>
</comment>
<comment type="disruption phenotype">
    <text evidence="2">Fails to localize guanylate cyclase gcy-12 to sensory cilia.</text>
</comment>
<protein>
    <recommendedName>
        <fullName>Dauer abnormal formation protein 25</fullName>
        <shortName>daf-25</shortName>
    </recommendedName>
    <alternativeName>
        <fullName>suppressor of che-2 small body size 3</fullName>
        <shortName>Chb-3</shortName>
    </alternativeName>
</protein>